<accession>Q6L2Z9</accession>
<reference key="1">
    <citation type="journal article" date="2004" name="Proc. Natl. Acad. Sci. U.S.A.">
        <title>Genome sequence of Picrophilus torridus and its implications for life around pH 0.</title>
        <authorList>
            <person name="Fuetterer O."/>
            <person name="Angelov A."/>
            <person name="Liesegang H."/>
            <person name="Gottschalk G."/>
            <person name="Schleper C."/>
            <person name="Schepers B."/>
            <person name="Dock C."/>
            <person name="Antranikian G."/>
            <person name="Liebl W."/>
        </authorList>
    </citation>
    <scope>NUCLEOTIDE SEQUENCE [LARGE SCALE GENOMIC DNA]</scope>
    <source>
        <strain>ATCC 700027 / DSM 9790 / JCM 10055 / NBRC 100828 / KAW 2/3</strain>
    </source>
</reference>
<dbReference type="EC" id="2.4.1.18" evidence="1"/>
<dbReference type="EMBL" id="AE017261">
    <property type="protein sequence ID" value="AAT42652.1"/>
    <property type="molecule type" value="Genomic_DNA"/>
</dbReference>
<dbReference type="SMR" id="Q6L2Z9"/>
<dbReference type="FunCoup" id="Q6L2Z9">
    <property type="interactions" value="9"/>
</dbReference>
<dbReference type="STRING" id="263820.PTO0067"/>
<dbReference type="CAZy" id="CBM48">
    <property type="family name" value="Carbohydrate-Binding Module Family 48"/>
</dbReference>
<dbReference type="CAZy" id="GH13">
    <property type="family name" value="Glycoside Hydrolase Family 13"/>
</dbReference>
<dbReference type="PaxDb" id="263820-PTO0067"/>
<dbReference type="KEGG" id="pto:PTO0067"/>
<dbReference type="PATRIC" id="fig|263820.9.peg.80"/>
<dbReference type="eggNOG" id="arCOG02951">
    <property type="taxonomic scope" value="Archaea"/>
</dbReference>
<dbReference type="HOGENOM" id="CLU_004245_4_0_2"/>
<dbReference type="InParanoid" id="Q6L2Z9"/>
<dbReference type="UniPathway" id="UPA00164"/>
<dbReference type="Proteomes" id="UP000000438">
    <property type="component" value="Chromosome"/>
</dbReference>
<dbReference type="GO" id="GO:0005829">
    <property type="term" value="C:cytosol"/>
    <property type="evidence" value="ECO:0007669"/>
    <property type="project" value="TreeGrafter"/>
</dbReference>
<dbReference type="GO" id="GO:0003844">
    <property type="term" value="F:1,4-alpha-glucan branching enzyme activity"/>
    <property type="evidence" value="ECO:0007669"/>
    <property type="project" value="UniProtKB-UniRule"/>
</dbReference>
<dbReference type="GO" id="GO:0043169">
    <property type="term" value="F:cation binding"/>
    <property type="evidence" value="ECO:0007669"/>
    <property type="project" value="InterPro"/>
</dbReference>
<dbReference type="GO" id="GO:0004553">
    <property type="term" value="F:hydrolase activity, hydrolyzing O-glycosyl compounds"/>
    <property type="evidence" value="ECO:0007669"/>
    <property type="project" value="InterPro"/>
</dbReference>
<dbReference type="GO" id="GO:0005978">
    <property type="term" value="P:glycogen biosynthetic process"/>
    <property type="evidence" value="ECO:0007669"/>
    <property type="project" value="UniProtKB-UniRule"/>
</dbReference>
<dbReference type="CDD" id="cd11322">
    <property type="entry name" value="AmyAc_Glg_BE"/>
    <property type="match status" value="1"/>
</dbReference>
<dbReference type="CDD" id="cd02855">
    <property type="entry name" value="E_set_GBE_prok_N"/>
    <property type="match status" value="1"/>
</dbReference>
<dbReference type="FunFam" id="2.60.40.10:FF:000169">
    <property type="entry name" value="1,4-alpha-glucan branching enzyme GlgB"/>
    <property type="match status" value="1"/>
</dbReference>
<dbReference type="Gene3D" id="3.20.20.80">
    <property type="entry name" value="Glycosidases"/>
    <property type="match status" value="1"/>
</dbReference>
<dbReference type="Gene3D" id="2.60.40.1180">
    <property type="entry name" value="Golgi alpha-mannosidase II"/>
    <property type="match status" value="1"/>
</dbReference>
<dbReference type="Gene3D" id="2.60.40.10">
    <property type="entry name" value="Immunoglobulins"/>
    <property type="match status" value="1"/>
</dbReference>
<dbReference type="HAMAP" id="MF_00685">
    <property type="entry name" value="GlgB"/>
    <property type="match status" value="1"/>
</dbReference>
<dbReference type="InterPro" id="IPR006048">
    <property type="entry name" value="A-amylase/branching_C"/>
</dbReference>
<dbReference type="InterPro" id="IPR037439">
    <property type="entry name" value="Branching_enzy"/>
</dbReference>
<dbReference type="InterPro" id="IPR006407">
    <property type="entry name" value="GlgB"/>
</dbReference>
<dbReference type="InterPro" id="IPR054169">
    <property type="entry name" value="GlgB_N"/>
</dbReference>
<dbReference type="InterPro" id="IPR044143">
    <property type="entry name" value="GlgB_N_E_set_prok"/>
</dbReference>
<dbReference type="InterPro" id="IPR006047">
    <property type="entry name" value="Glyco_hydro_13_cat_dom"/>
</dbReference>
<dbReference type="InterPro" id="IPR004193">
    <property type="entry name" value="Glyco_hydro_13_N"/>
</dbReference>
<dbReference type="InterPro" id="IPR013780">
    <property type="entry name" value="Glyco_hydro_b"/>
</dbReference>
<dbReference type="InterPro" id="IPR017853">
    <property type="entry name" value="Glycoside_hydrolase_SF"/>
</dbReference>
<dbReference type="InterPro" id="IPR013783">
    <property type="entry name" value="Ig-like_fold"/>
</dbReference>
<dbReference type="InterPro" id="IPR014756">
    <property type="entry name" value="Ig_E-set"/>
</dbReference>
<dbReference type="NCBIfam" id="TIGR01515">
    <property type="entry name" value="branching_enzym"/>
    <property type="match status" value="1"/>
</dbReference>
<dbReference type="NCBIfam" id="NF003811">
    <property type="entry name" value="PRK05402.1"/>
    <property type="match status" value="1"/>
</dbReference>
<dbReference type="NCBIfam" id="NF008967">
    <property type="entry name" value="PRK12313.1"/>
    <property type="match status" value="1"/>
</dbReference>
<dbReference type="PANTHER" id="PTHR43651">
    <property type="entry name" value="1,4-ALPHA-GLUCAN-BRANCHING ENZYME"/>
    <property type="match status" value="1"/>
</dbReference>
<dbReference type="PANTHER" id="PTHR43651:SF3">
    <property type="entry name" value="1,4-ALPHA-GLUCAN-BRANCHING ENZYME"/>
    <property type="match status" value="1"/>
</dbReference>
<dbReference type="Pfam" id="PF00128">
    <property type="entry name" value="Alpha-amylase"/>
    <property type="match status" value="2"/>
</dbReference>
<dbReference type="Pfam" id="PF02806">
    <property type="entry name" value="Alpha-amylase_C"/>
    <property type="match status" value="1"/>
</dbReference>
<dbReference type="Pfam" id="PF02922">
    <property type="entry name" value="CBM_48"/>
    <property type="match status" value="1"/>
</dbReference>
<dbReference type="Pfam" id="PF22019">
    <property type="entry name" value="GlgB_N"/>
    <property type="match status" value="1"/>
</dbReference>
<dbReference type="PIRSF" id="PIRSF000463">
    <property type="entry name" value="GlgB"/>
    <property type="match status" value="1"/>
</dbReference>
<dbReference type="SMART" id="SM00642">
    <property type="entry name" value="Aamy"/>
    <property type="match status" value="1"/>
</dbReference>
<dbReference type="SUPFAM" id="SSF51445">
    <property type="entry name" value="(Trans)glycosidases"/>
    <property type="match status" value="1"/>
</dbReference>
<dbReference type="SUPFAM" id="SSF81296">
    <property type="entry name" value="E set domains"/>
    <property type="match status" value="1"/>
</dbReference>
<dbReference type="SUPFAM" id="SSF51011">
    <property type="entry name" value="Glycosyl hydrolase domain"/>
    <property type="match status" value="1"/>
</dbReference>
<protein>
    <recommendedName>
        <fullName evidence="1">1,4-alpha-glucan branching enzyme GlgB</fullName>
        <ecNumber evidence="1">2.4.1.18</ecNumber>
    </recommendedName>
    <alternativeName>
        <fullName evidence="1">1,4-alpha-D-glucan:1,4-alpha-D-glucan 6-glucosyl-transferase</fullName>
    </alternativeName>
    <alternativeName>
        <fullName evidence="1">Alpha-(1-&gt;4)-glucan branching enzyme</fullName>
    </alternativeName>
    <alternativeName>
        <fullName evidence="1">Glycogen branching enzyme</fullName>
        <shortName evidence="1">BE</shortName>
    </alternativeName>
</protein>
<name>GLGB_PICTO</name>
<proteinExistence type="inferred from homology"/>
<organism>
    <name type="scientific">Picrophilus torridus (strain ATCC 700027 / DSM 9790 / JCM 10055 / NBRC 100828 / KAW 2/3)</name>
    <dbReference type="NCBI Taxonomy" id="1122961"/>
    <lineage>
        <taxon>Archaea</taxon>
        <taxon>Methanobacteriati</taxon>
        <taxon>Thermoplasmatota</taxon>
        <taxon>Thermoplasmata</taxon>
        <taxon>Thermoplasmatales</taxon>
        <taxon>Picrophilaceae</taxon>
        <taxon>Picrophilus</taxon>
    </lineage>
</organism>
<sequence>MIKLYNTCMDFKCLNDVECSHPEKILGPHLEDAYIIRAYIPIARAAFILIDNKKYQMIDNGKVFEYRSDNEINDYKILYIDDSGYEKTIDDPYRFRPEISDYDIYLYGTGRLFEAYKTFGAHLKTIKDVSGCNFVVWAPSALSVSVVGNFNHWTPGMHPMINVNDSGIWALFIPGIKENEVYKFAIKTKNNEIKMKTDPFAFYTEKRPRTGSIVINDDFHWTDNSFKRSENALSIYEMHLGSWKRNNGDYYNYREIADMLIDHLKKTGFNCVEIMPVMEHPLDISWGYQVVNYFAPTSRYGKPDDFKYLVNRLHENNIMVILDFVPAHFPDDDYGLYMFDGTHLYDYEDPRMGRTPDWGTNIFDFGRNGVRSFIASAAVFWIDKYHVDGLRFDAVTSMIYLDFGRKPGEWIPNINGGNINLEAVSLLKEINDYIHNKYYNVITVAEESSTYPGITSESGLNFNYKWNLGWMHDTLDFFHEDPLYRKYRINNLTFSVMYMYSENFILPVSHDEVVYGKGSLYRKMPGNKNEKISNVKLFLSYMFSYPGKKLLFMGNEFAQKNEWNVLSQLSWNDLDDGKYVMELIHDLNNLYKNDFNFYNDKNFSWIDFNDKTNTVISFNRGNAVCIFNFTPVERENYAIGVDYPSRYIEIINTDSKKYNGGNILNESIYACKYPMHGRRYSIEIDLPPLAAVIMEPEDLNGSSGN</sequence>
<gene>
    <name evidence="1" type="primary">glgB</name>
    <name type="ordered locus">PTO0067</name>
</gene>
<feature type="chain" id="PRO_0000188772" description="1,4-alpha-glucan branching enzyme GlgB">
    <location>
        <begin position="1"/>
        <end position="705"/>
    </location>
</feature>
<feature type="active site" description="Nucleophile" evidence="1">
    <location>
        <position position="393"/>
    </location>
</feature>
<feature type="active site" description="Proton donor" evidence="1">
    <location>
        <position position="446"/>
    </location>
</feature>
<keyword id="KW-0119">Carbohydrate metabolism</keyword>
<keyword id="KW-0320">Glycogen biosynthesis</keyword>
<keyword id="KW-0321">Glycogen metabolism</keyword>
<keyword id="KW-0328">Glycosyltransferase</keyword>
<keyword id="KW-0808">Transferase</keyword>
<evidence type="ECO:0000255" key="1">
    <source>
        <dbReference type="HAMAP-Rule" id="MF_00685"/>
    </source>
</evidence>
<comment type="function">
    <text evidence="1">Catalyzes the formation of the alpha-1,6-glucosidic linkages in glycogen by scission of a 1,4-alpha-linked oligosaccharide from growing alpha-1,4-glucan chains and the subsequent attachment of the oligosaccharide to the alpha-1,6 position.</text>
</comment>
<comment type="catalytic activity">
    <reaction evidence="1">
        <text>Transfers a segment of a (1-&gt;4)-alpha-D-glucan chain to a primary hydroxy group in a similar glucan chain.</text>
        <dbReference type="EC" id="2.4.1.18"/>
    </reaction>
</comment>
<comment type="pathway">
    <text evidence="1">Glycan biosynthesis; glycogen biosynthesis.</text>
</comment>
<comment type="subunit">
    <text evidence="1">Monomer.</text>
</comment>
<comment type="similarity">
    <text evidence="1">Belongs to the glycosyl hydrolase 13 family. GlgB subfamily.</text>
</comment>